<gene>
    <name type="primary">OSER1</name>
    <name type="synonym">C20orf111</name>
    <name type="ORF">BM-038</name>
    <name type="ORF">HSPC168</name>
    <name type="ORF">HSPC207</name>
</gene>
<proteinExistence type="evidence at protein level"/>
<sequence>MKSEAKDGEEESLQTAFKKLRVDASGSVASLSVGEGTGVRAPVRTATDDTKPKTTCASKDSWHGSTRKSSRGAVRTQRRRRSKSPVLHPPKFIHCSTIASSSSSQLKHKSQTDSPDGSSGLGISSPKEFSAGESSTSLDANHTGAVVEPLRTSVPRLPSESKKEDSSDATQVPQASLKASDLSDFQSVSKLNQGKPCTCIGKECQCKRWHDMEVYSFSGLQSVPPLAPERRSTLEDYSQSLHARTLSGSPRSCSEQARVFVDDVTIEDLSGYMEYYLYIPKKMSHMAEMMYT</sequence>
<protein>
    <recommendedName>
        <fullName>Oxidative stress-responsive serine-rich protein 1</fullName>
    </recommendedName>
    <alternativeName>
        <fullName>Oxidative stress-responsive protein 1</fullName>
    </alternativeName>
    <alternativeName>
        <fullName>Peroxide-inducible transcript 1 protein</fullName>
    </alternativeName>
</protein>
<name>OSER1_HUMAN</name>
<reference key="1">
    <citation type="journal article" date="2000" name="Genome Res.">
        <title>Cloning and functional analysis of cDNAs with open reading frames for 300 previously undefined genes expressed in CD34+ hematopoietic stem/progenitor cells.</title>
        <authorList>
            <person name="Zhang Q.-H."/>
            <person name="Ye M."/>
            <person name="Wu X.-Y."/>
            <person name="Ren S.-X."/>
            <person name="Zhao M."/>
            <person name="Zhao C.-J."/>
            <person name="Fu G."/>
            <person name="Shen Y."/>
            <person name="Fan H.-Y."/>
            <person name="Lu G."/>
            <person name="Zhong M."/>
            <person name="Xu X.-R."/>
            <person name="Han Z.-G."/>
            <person name="Zhang J.-W."/>
            <person name="Tao J."/>
            <person name="Huang Q.-H."/>
            <person name="Zhou J."/>
            <person name="Hu G.-X."/>
            <person name="Gu J."/>
            <person name="Chen S.-J."/>
            <person name="Chen Z."/>
        </authorList>
    </citation>
    <scope>NUCLEOTIDE SEQUENCE [LARGE SCALE MRNA]</scope>
    <source>
        <tissue>Bone marrow</tissue>
        <tissue>Umbilical cord blood</tissue>
    </source>
</reference>
<reference key="2">
    <citation type="submission" date="1999-11" db="EMBL/GenBank/DDBJ databases">
        <authorList>
            <person name="Stavrides G.S."/>
            <person name="Huckle E.J."/>
            <person name="Deloukas P."/>
        </authorList>
    </citation>
    <scope>NUCLEOTIDE SEQUENCE [MRNA]</scope>
</reference>
<reference key="3">
    <citation type="journal article" date="2004" name="Nat. Genet.">
        <title>Complete sequencing and characterization of 21,243 full-length human cDNAs.</title>
        <authorList>
            <person name="Ota T."/>
            <person name="Suzuki Y."/>
            <person name="Nishikawa T."/>
            <person name="Otsuki T."/>
            <person name="Sugiyama T."/>
            <person name="Irie R."/>
            <person name="Wakamatsu A."/>
            <person name="Hayashi K."/>
            <person name="Sato H."/>
            <person name="Nagai K."/>
            <person name="Kimura K."/>
            <person name="Makita H."/>
            <person name="Sekine M."/>
            <person name="Obayashi M."/>
            <person name="Nishi T."/>
            <person name="Shibahara T."/>
            <person name="Tanaka T."/>
            <person name="Ishii S."/>
            <person name="Yamamoto J."/>
            <person name="Saito K."/>
            <person name="Kawai Y."/>
            <person name="Isono Y."/>
            <person name="Nakamura Y."/>
            <person name="Nagahari K."/>
            <person name="Murakami K."/>
            <person name="Yasuda T."/>
            <person name="Iwayanagi T."/>
            <person name="Wagatsuma M."/>
            <person name="Shiratori A."/>
            <person name="Sudo H."/>
            <person name="Hosoiri T."/>
            <person name="Kaku Y."/>
            <person name="Kodaira H."/>
            <person name="Kondo H."/>
            <person name="Sugawara M."/>
            <person name="Takahashi M."/>
            <person name="Kanda K."/>
            <person name="Yokoi T."/>
            <person name="Furuya T."/>
            <person name="Kikkawa E."/>
            <person name="Omura Y."/>
            <person name="Abe K."/>
            <person name="Kamihara K."/>
            <person name="Katsuta N."/>
            <person name="Sato K."/>
            <person name="Tanikawa M."/>
            <person name="Yamazaki M."/>
            <person name="Ninomiya K."/>
            <person name="Ishibashi T."/>
            <person name="Yamashita H."/>
            <person name="Murakawa K."/>
            <person name="Fujimori K."/>
            <person name="Tanai H."/>
            <person name="Kimata M."/>
            <person name="Watanabe M."/>
            <person name="Hiraoka S."/>
            <person name="Chiba Y."/>
            <person name="Ishida S."/>
            <person name="Ono Y."/>
            <person name="Takiguchi S."/>
            <person name="Watanabe S."/>
            <person name="Yosida M."/>
            <person name="Hotuta T."/>
            <person name="Kusano J."/>
            <person name="Kanehori K."/>
            <person name="Takahashi-Fujii A."/>
            <person name="Hara H."/>
            <person name="Tanase T.-O."/>
            <person name="Nomura Y."/>
            <person name="Togiya S."/>
            <person name="Komai F."/>
            <person name="Hara R."/>
            <person name="Takeuchi K."/>
            <person name="Arita M."/>
            <person name="Imose N."/>
            <person name="Musashino K."/>
            <person name="Yuuki H."/>
            <person name="Oshima A."/>
            <person name="Sasaki N."/>
            <person name="Aotsuka S."/>
            <person name="Yoshikawa Y."/>
            <person name="Matsunawa H."/>
            <person name="Ichihara T."/>
            <person name="Shiohata N."/>
            <person name="Sano S."/>
            <person name="Moriya S."/>
            <person name="Momiyama H."/>
            <person name="Satoh N."/>
            <person name="Takami S."/>
            <person name="Terashima Y."/>
            <person name="Suzuki O."/>
            <person name="Nakagawa S."/>
            <person name="Senoh A."/>
            <person name="Mizoguchi H."/>
            <person name="Goto Y."/>
            <person name="Shimizu F."/>
            <person name="Wakebe H."/>
            <person name="Hishigaki H."/>
            <person name="Watanabe T."/>
            <person name="Sugiyama A."/>
            <person name="Takemoto M."/>
            <person name="Kawakami B."/>
            <person name="Yamazaki M."/>
            <person name="Watanabe K."/>
            <person name="Kumagai A."/>
            <person name="Itakura S."/>
            <person name="Fukuzumi Y."/>
            <person name="Fujimori Y."/>
            <person name="Komiyama M."/>
            <person name="Tashiro H."/>
            <person name="Tanigami A."/>
            <person name="Fujiwara T."/>
            <person name="Ono T."/>
            <person name="Yamada K."/>
            <person name="Fujii Y."/>
            <person name="Ozaki K."/>
            <person name="Hirao M."/>
            <person name="Ohmori Y."/>
            <person name="Kawabata A."/>
            <person name="Hikiji T."/>
            <person name="Kobatake N."/>
            <person name="Inagaki H."/>
            <person name="Ikema Y."/>
            <person name="Okamoto S."/>
            <person name="Okitani R."/>
            <person name="Kawakami T."/>
            <person name="Noguchi S."/>
            <person name="Itoh T."/>
            <person name="Shigeta K."/>
            <person name="Senba T."/>
            <person name="Matsumura K."/>
            <person name="Nakajima Y."/>
            <person name="Mizuno T."/>
            <person name="Morinaga M."/>
            <person name="Sasaki M."/>
            <person name="Togashi T."/>
            <person name="Oyama M."/>
            <person name="Hata H."/>
            <person name="Watanabe M."/>
            <person name="Komatsu T."/>
            <person name="Mizushima-Sugano J."/>
            <person name="Satoh T."/>
            <person name="Shirai Y."/>
            <person name="Takahashi Y."/>
            <person name="Nakagawa K."/>
            <person name="Okumura K."/>
            <person name="Nagase T."/>
            <person name="Nomura N."/>
            <person name="Kikuchi H."/>
            <person name="Masuho Y."/>
            <person name="Yamashita R."/>
            <person name="Nakai K."/>
            <person name="Yada T."/>
            <person name="Nakamura Y."/>
            <person name="Ohara O."/>
            <person name="Isogai T."/>
            <person name="Sugano S."/>
        </authorList>
    </citation>
    <scope>NUCLEOTIDE SEQUENCE [LARGE SCALE MRNA]</scope>
    <source>
        <tissue>Gastric carcinoma</tissue>
        <tissue>Testis</tissue>
    </source>
</reference>
<reference key="4">
    <citation type="journal article" date="2001" name="Nature">
        <title>The DNA sequence and comparative analysis of human chromosome 20.</title>
        <authorList>
            <person name="Deloukas P."/>
            <person name="Matthews L.H."/>
            <person name="Ashurst J.L."/>
            <person name="Burton J."/>
            <person name="Gilbert J.G.R."/>
            <person name="Jones M."/>
            <person name="Stavrides G."/>
            <person name="Almeida J.P."/>
            <person name="Babbage A.K."/>
            <person name="Bagguley C.L."/>
            <person name="Bailey J."/>
            <person name="Barlow K.F."/>
            <person name="Bates K.N."/>
            <person name="Beard L.M."/>
            <person name="Beare D.M."/>
            <person name="Beasley O.P."/>
            <person name="Bird C.P."/>
            <person name="Blakey S.E."/>
            <person name="Bridgeman A.M."/>
            <person name="Brown A.J."/>
            <person name="Buck D."/>
            <person name="Burrill W.D."/>
            <person name="Butler A.P."/>
            <person name="Carder C."/>
            <person name="Carter N.P."/>
            <person name="Chapman J.C."/>
            <person name="Clamp M."/>
            <person name="Clark G."/>
            <person name="Clark L.N."/>
            <person name="Clark S.Y."/>
            <person name="Clee C.M."/>
            <person name="Clegg S."/>
            <person name="Cobley V.E."/>
            <person name="Collier R.E."/>
            <person name="Connor R.E."/>
            <person name="Corby N.R."/>
            <person name="Coulson A."/>
            <person name="Coville G.J."/>
            <person name="Deadman R."/>
            <person name="Dhami P.D."/>
            <person name="Dunn M."/>
            <person name="Ellington A.G."/>
            <person name="Frankland J.A."/>
            <person name="Fraser A."/>
            <person name="French L."/>
            <person name="Garner P."/>
            <person name="Grafham D.V."/>
            <person name="Griffiths C."/>
            <person name="Griffiths M.N.D."/>
            <person name="Gwilliam R."/>
            <person name="Hall R.E."/>
            <person name="Hammond S."/>
            <person name="Harley J.L."/>
            <person name="Heath P.D."/>
            <person name="Ho S."/>
            <person name="Holden J.L."/>
            <person name="Howden P.J."/>
            <person name="Huckle E."/>
            <person name="Hunt A.R."/>
            <person name="Hunt S.E."/>
            <person name="Jekosch K."/>
            <person name="Johnson C.M."/>
            <person name="Johnson D."/>
            <person name="Kay M.P."/>
            <person name="Kimberley A.M."/>
            <person name="King A."/>
            <person name="Knights A."/>
            <person name="Laird G.K."/>
            <person name="Lawlor S."/>
            <person name="Lehvaeslaiho M.H."/>
            <person name="Leversha M.A."/>
            <person name="Lloyd C."/>
            <person name="Lloyd D.M."/>
            <person name="Lovell J.D."/>
            <person name="Marsh V.L."/>
            <person name="Martin S.L."/>
            <person name="McConnachie L.J."/>
            <person name="McLay K."/>
            <person name="McMurray A.A."/>
            <person name="Milne S.A."/>
            <person name="Mistry D."/>
            <person name="Moore M.J.F."/>
            <person name="Mullikin J.C."/>
            <person name="Nickerson T."/>
            <person name="Oliver K."/>
            <person name="Parker A."/>
            <person name="Patel R."/>
            <person name="Pearce T.A.V."/>
            <person name="Peck A.I."/>
            <person name="Phillimore B.J.C.T."/>
            <person name="Prathalingam S.R."/>
            <person name="Plumb R.W."/>
            <person name="Ramsay H."/>
            <person name="Rice C.M."/>
            <person name="Ross M.T."/>
            <person name="Scott C.E."/>
            <person name="Sehra H.K."/>
            <person name="Shownkeen R."/>
            <person name="Sims S."/>
            <person name="Skuce C.D."/>
            <person name="Smith M.L."/>
            <person name="Soderlund C."/>
            <person name="Steward C.A."/>
            <person name="Sulston J.E."/>
            <person name="Swann R.M."/>
            <person name="Sycamore N."/>
            <person name="Taylor R."/>
            <person name="Tee L."/>
            <person name="Thomas D.W."/>
            <person name="Thorpe A."/>
            <person name="Tracey A."/>
            <person name="Tromans A.C."/>
            <person name="Vaudin M."/>
            <person name="Wall M."/>
            <person name="Wallis J.M."/>
            <person name="Whitehead S.L."/>
            <person name="Whittaker P."/>
            <person name="Willey D.L."/>
            <person name="Williams L."/>
            <person name="Williams S.A."/>
            <person name="Wilming L."/>
            <person name="Wray P.W."/>
            <person name="Hubbard T."/>
            <person name="Durbin R.M."/>
            <person name="Bentley D.R."/>
            <person name="Beck S."/>
            <person name="Rogers J."/>
        </authorList>
    </citation>
    <scope>NUCLEOTIDE SEQUENCE [LARGE SCALE GENOMIC DNA]</scope>
</reference>
<reference key="5">
    <citation type="submission" date="2005-09" db="EMBL/GenBank/DDBJ databases">
        <authorList>
            <person name="Mural R.J."/>
            <person name="Istrail S."/>
            <person name="Sutton G.G."/>
            <person name="Florea L."/>
            <person name="Halpern A.L."/>
            <person name="Mobarry C.M."/>
            <person name="Lippert R."/>
            <person name="Walenz B."/>
            <person name="Shatkay H."/>
            <person name="Dew I."/>
            <person name="Miller J.R."/>
            <person name="Flanigan M.J."/>
            <person name="Edwards N.J."/>
            <person name="Bolanos R."/>
            <person name="Fasulo D."/>
            <person name="Halldorsson B.V."/>
            <person name="Hannenhalli S."/>
            <person name="Turner R."/>
            <person name="Yooseph S."/>
            <person name="Lu F."/>
            <person name="Nusskern D.R."/>
            <person name="Shue B.C."/>
            <person name="Zheng X.H."/>
            <person name="Zhong F."/>
            <person name="Delcher A.L."/>
            <person name="Huson D.H."/>
            <person name="Kravitz S.A."/>
            <person name="Mouchard L."/>
            <person name="Reinert K."/>
            <person name="Remington K.A."/>
            <person name="Clark A.G."/>
            <person name="Waterman M.S."/>
            <person name="Eichler E.E."/>
            <person name="Adams M.D."/>
            <person name="Hunkapiller M.W."/>
            <person name="Myers E.W."/>
            <person name="Venter J.C."/>
        </authorList>
    </citation>
    <scope>NUCLEOTIDE SEQUENCE [LARGE SCALE GENOMIC DNA]</scope>
</reference>
<reference key="6">
    <citation type="journal article" date="2004" name="Genome Res.">
        <title>The status, quality, and expansion of the NIH full-length cDNA project: the Mammalian Gene Collection (MGC).</title>
        <authorList>
            <consortium name="The MGC Project Team"/>
        </authorList>
    </citation>
    <scope>NUCLEOTIDE SEQUENCE [LARGE SCALE MRNA]</scope>
    <source>
        <tissue>Skin</tissue>
    </source>
</reference>
<reference key="7">
    <citation type="journal article" date="2013" name="J. Proteome Res.">
        <title>Toward a comprehensive characterization of a human cancer cell phosphoproteome.</title>
        <authorList>
            <person name="Zhou H."/>
            <person name="Di Palma S."/>
            <person name="Preisinger C."/>
            <person name="Peng M."/>
            <person name="Polat A.N."/>
            <person name="Heck A.J."/>
            <person name="Mohammed S."/>
        </authorList>
    </citation>
    <scope>PHOSPHORYLATION [LARGE SCALE ANALYSIS] AT THR-233</scope>
    <scope>IDENTIFICATION BY MASS SPECTROMETRY [LARGE SCALE ANALYSIS]</scope>
    <source>
        <tissue>Cervix carcinoma</tissue>
    </source>
</reference>
<organism>
    <name type="scientific">Homo sapiens</name>
    <name type="common">Human</name>
    <dbReference type="NCBI Taxonomy" id="9606"/>
    <lineage>
        <taxon>Eukaryota</taxon>
        <taxon>Metazoa</taxon>
        <taxon>Chordata</taxon>
        <taxon>Craniata</taxon>
        <taxon>Vertebrata</taxon>
        <taxon>Euteleostomi</taxon>
        <taxon>Mammalia</taxon>
        <taxon>Eutheria</taxon>
        <taxon>Euarchontoglires</taxon>
        <taxon>Primates</taxon>
        <taxon>Haplorrhini</taxon>
        <taxon>Catarrhini</taxon>
        <taxon>Hominidae</taxon>
        <taxon>Homo</taxon>
    </lineage>
</organism>
<keyword id="KW-0597">Phosphoprotein</keyword>
<keyword id="KW-1267">Proteomics identification</keyword>
<keyword id="KW-1185">Reference proteome</keyword>
<comment type="interaction">
    <interactant intactId="EBI-2872222">
        <id>Q9NX31</id>
    </interactant>
    <interactant intactId="EBI-12508070">
        <id>Q8IV20</id>
        <label>LACC1</label>
    </interactant>
    <organismsDiffer>false</organismsDiffer>
    <experiments>4</experiments>
</comment>
<comment type="sequence caution" evidence="3">
    <conflict type="frameshift">
        <sequence resource="EMBL-CDS" id="AAF36127"/>
    </conflict>
</comment>
<comment type="sequence caution" evidence="3">
    <conflict type="frameshift">
        <sequence resource="EMBL-CDS" id="AAF67625"/>
    </conflict>
</comment>
<comment type="sequence caution" evidence="3">
    <conflict type="frameshift">
        <sequence resource="EMBL-CDS" id="BAA91191"/>
    </conflict>
</comment>
<accession>Q9NX31</accession>
<accession>B2RCK4</accession>
<accession>O95912</accession>
<accession>Q9NZ84</accession>
<accession>Q9P0R8</accession>
<evidence type="ECO:0000250" key="1">
    <source>
        <dbReference type="UniProtKB" id="Q703I1"/>
    </source>
</evidence>
<evidence type="ECO:0000256" key="2">
    <source>
        <dbReference type="SAM" id="MobiDB-lite"/>
    </source>
</evidence>
<evidence type="ECO:0000305" key="3"/>
<evidence type="ECO:0007744" key="4">
    <source>
    </source>
</evidence>
<dbReference type="EMBL" id="AF161517">
    <property type="protein sequence ID" value="AAF29132.1"/>
    <property type="molecule type" value="mRNA"/>
</dbReference>
<dbReference type="EMBL" id="AF151041">
    <property type="protein sequence ID" value="AAF36127.1"/>
    <property type="status" value="ALT_FRAME"/>
    <property type="molecule type" value="mRNA"/>
</dbReference>
<dbReference type="EMBL" id="AF217514">
    <property type="protein sequence ID" value="AAF67625.1"/>
    <property type="status" value="ALT_FRAME"/>
    <property type="molecule type" value="mRNA"/>
</dbReference>
<dbReference type="EMBL" id="AL133000">
    <property type="protein sequence ID" value="CAB61348.1"/>
    <property type="molecule type" value="mRNA"/>
</dbReference>
<dbReference type="EMBL" id="AK000476">
    <property type="protein sequence ID" value="BAA91191.1"/>
    <property type="status" value="ALT_FRAME"/>
    <property type="molecule type" value="mRNA"/>
</dbReference>
<dbReference type="EMBL" id="AK315155">
    <property type="protein sequence ID" value="BAG37601.1"/>
    <property type="molecule type" value="mRNA"/>
</dbReference>
<dbReference type="EMBL" id="AL035447">
    <property type="status" value="NOT_ANNOTATED_CDS"/>
    <property type="molecule type" value="Genomic_DNA"/>
</dbReference>
<dbReference type="EMBL" id="CH471077">
    <property type="protein sequence ID" value="EAW75938.1"/>
    <property type="molecule type" value="Genomic_DNA"/>
</dbReference>
<dbReference type="EMBL" id="BC064973">
    <property type="protein sequence ID" value="AAH64973.1"/>
    <property type="molecule type" value="mRNA"/>
</dbReference>
<dbReference type="CCDS" id="CCDS13327.1"/>
<dbReference type="RefSeq" id="NP_057554.4">
    <property type="nucleotide sequence ID" value="NM_016470.7"/>
</dbReference>
<dbReference type="RefSeq" id="XP_011527153.1">
    <property type="nucleotide sequence ID" value="XM_011528851.1"/>
</dbReference>
<dbReference type="RefSeq" id="XP_011527155.1">
    <property type="nucleotide sequence ID" value="XM_011528853.4"/>
</dbReference>
<dbReference type="RefSeq" id="XP_016883362.1">
    <property type="nucleotide sequence ID" value="XM_017027873.2"/>
</dbReference>
<dbReference type="RefSeq" id="XP_047296146.1">
    <property type="nucleotide sequence ID" value="XM_047440190.1"/>
</dbReference>
<dbReference type="RefSeq" id="XP_047296147.1">
    <property type="nucleotide sequence ID" value="XM_047440191.1"/>
</dbReference>
<dbReference type="RefSeq" id="XP_047296148.1">
    <property type="nucleotide sequence ID" value="XM_047440192.1"/>
</dbReference>
<dbReference type="SMR" id="Q9NX31"/>
<dbReference type="BioGRID" id="119588">
    <property type="interactions" value="13"/>
</dbReference>
<dbReference type="FunCoup" id="Q9NX31">
    <property type="interactions" value="1390"/>
</dbReference>
<dbReference type="IntAct" id="Q9NX31">
    <property type="interactions" value="12"/>
</dbReference>
<dbReference type="STRING" id="9606.ENSP00000255174"/>
<dbReference type="iPTMnet" id="Q9NX31"/>
<dbReference type="PhosphoSitePlus" id="Q9NX31"/>
<dbReference type="BioMuta" id="OSER1"/>
<dbReference type="DMDM" id="28212214"/>
<dbReference type="jPOST" id="Q9NX31"/>
<dbReference type="MassIVE" id="Q9NX31"/>
<dbReference type="PaxDb" id="9606-ENSP00000362061"/>
<dbReference type="PeptideAtlas" id="Q9NX31"/>
<dbReference type="ProteomicsDB" id="83026"/>
<dbReference type="Pumba" id="Q9NX31"/>
<dbReference type="Antibodypedia" id="43666">
    <property type="antibodies" value="67 antibodies from 16 providers"/>
</dbReference>
<dbReference type="DNASU" id="51526"/>
<dbReference type="Ensembl" id="ENST00000255174.3">
    <property type="protein sequence ID" value="ENSP00000255174.2"/>
    <property type="gene ID" value="ENSG00000132823.11"/>
</dbReference>
<dbReference type="Ensembl" id="ENST00000372970.6">
    <property type="protein sequence ID" value="ENSP00000362061.1"/>
    <property type="gene ID" value="ENSG00000132823.11"/>
</dbReference>
<dbReference type="GeneID" id="51526"/>
<dbReference type="KEGG" id="hsa:51526"/>
<dbReference type="MANE-Select" id="ENST00000255174.3">
    <property type="protein sequence ID" value="ENSP00000255174.2"/>
    <property type="RefSeq nucleotide sequence ID" value="NM_016470.8"/>
    <property type="RefSeq protein sequence ID" value="NP_057554.4"/>
</dbReference>
<dbReference type="UCSC" id="uc002xlk.4">
    <property type="organism name" value="human"/>
</dbReference>
<dbReference type="AGR" id="HGNC:16105"/>
<dbReference type="CTD" id="51526"/>
<dbReference type="DisGeNET" id="51526"/>
<dbReference type="GeneCards" id="OSER1"/>
<dbReference type="HGNC" id="HGNC:16105">
    <property type="gene designation" value="OSER1"/>
</dbReference>
<dbReference type="HPA" id="ENSG00000132823">
    <property type="expression patterns" value="Low tissue specificity"/>
</dbReference>
<dbReference type="neXtProt" id="NX_Q9NX31"/>
<dbReference type="OpenTargets" id="ENSG00000132823"/>
<dbReference type="PharmGKB" id="PA25651"/>
<dbReference type="VEuPathDB" id="HostDB:ENSG00000132823"/>
<dbReference type="eggNOG" id="ENOG502QUK0">
    <property type="taxonomic scope" value="Eukaryota"/>
</dbReference>
<dbReference type="GeneTree" id="ENSGT00390000018547"/>
<dbReference type="HOGENOM" id="CLU_050222_0_0_1"/>
<dbReference type="InParanoid" id="Q9NX31"/>
<dbReference type="OMA" id="KACQCKL"/>
<dbReference type="OrthoDB" id="10045817at2759"/>
<dbReference type="PAN-GO" id="Q9NX31">
    <property type="GO annotations" value="1 GO annotation based on evolutionary models"/>
</dbReference>
<dbReference type="PhylomeDB" id="Q9NX31"/>
<dbReference type="TreeFam" id="TF331727"/>
<dbReference type="PathwayCommons" id="Q9NX31"/>
<dbReference type="SignaLink" id="Q9NX31"/>
<dbReference type="BioGRID-ORCS" id="51526">
    <property type="hits" value="12 hits in 1123 CRISPR screens"/>
</dbReference>
<dbReference type="ChiTaRS" id="OSER1">
    <property type="organism name" value="human"/>
</dbReference>
<dbReference type="GeneWiki" id="C20orf111"/>
<dbReference type="GenomeRNAi" id="51526"/>
<dbReference type="Pharos" id="Q9NX31">
    <property type="development level" value="Tbio"/>
</dbReference>
<dbReference type="PRO" id="PR:Q9NX31"/>
<dbReference type="Proteomes" id="UP000005640">
    <property type="component" value="Chromosome 20"/>
</dbReference>
<dbReference type="RNAct" id="Q9NX31">
    <property type="molecule type" value="protein"/>
</dbReference>
<dbReference type="Bgee" id="ENSG00000132823">
    <property type="expression patterns" value="Expressed in left testis and 201 other cell types or tissues"/>
</dbReference>
<dbReference type="GO" id="GO:0005634">
    <property type="term" value="C:nucleus"/>
    <property type="evidence" value="ECO:0000314"/>
    <property type="project" value="FlyBase"/>
</dbReference>
<dbReference type="GO" id="GO:0070301">
    <property type="term" value="P:cellular response to hydrogen peroxide"/>
    <property type="evidence" value="ECO:0000318"/>
    <property type="project" value="GO_Central"/>
</dbReference>
<dbReference type="InterPro" id="IPR008494">
    <property type="entry name" value="DUF776"/>
</dbReference>
<dbReference type="PANTHER" id="PTHR31383">
    <property type="entry name" value="OXIDATIVE STRESS-RESPONSE SERINE-RICH PROTEIN 1"/>
    <property type="match status" value="1"/>
</dbReference>
<dbReference type="PANTHER" id="PTHR31383:SF2">
    <property type="entry name" value="OXIDATIVE STRESS-RESPONSIVE SERINE-RICH PROTEIN 1"/>
    <property type="match status" value="1"/>
</dbReference>
<dbReference type="Pfam" id="PF05604">
    <property type="entry name" value="DUF776"/>
    <property type="match status" value="1"/>
</dbReference>
<feature type="chain" id="PRO_0000079453" description="Oxidative stress-responsive serine-rich protein 1">
    <location>
        <begin position="1"/>
        <end position="292"/>
    </location>
</feature>
<feature type="region of interest" description="Disordered" evidence="2">
    <location>
        <begin position="24"/>
        <end position="178"/>
    </location>
</feature>
<feature type="compositionally biased region" description="Basic residues" evidence="2">
    <location>
        <begin position="65"/>
        <end position="83"/>
    </location>
</feature>
<feature type="modified residue" description="Phosphothreonine" evidence="1">
    <location>
        <position position="143"/>
    </location>
</feature>
<feature type="modified residue" description="Phosphothreonine" evidence="4">
    <location>
        <position position="233"/>
    </location>
</feature>
<feature type="sequence variant" id="VAR_024333" description="In dbSNP:rs9346.">
    <original>V</original>
    <variation>G</variation>
    <location>
        <position position="74"/>
    </location>
</feature>